<sequence length="526" mass="58585">MQSESGIVADFEVGEEFHEEPKTYYELKSQPLKSSSSAEHSGASKPPLSSSTMTSRILLRQQLMREQMQEQERREQQQKLQAAQFMQQRVAVSQTPAINVSVPTTLPSATQVPMEVLKVQTHLENPTKYHIQQAQRHQVKQYLSTTLANKHAGQVLSPPCPNQPGDHAMPPVPGSSAPNSPMAMLTLNSNCEKEAFYKFEEQSRAESECPGMNTHSRASCMQMDDVIDDIISLESSYNEEILGLMDPALQMANTLPVSGNLIDLYSNQGLPPPGLTISNSCPANLPNIKRELTACIFPTESEARALAKERQKKDNHNLIERRRRFNINDRIKELGTLIPKSNDPDMRWNKGTILKASVDYIRKLQREQQRAKDLENRQKKLEHANRHLLLRVQELEMQARAHGLSLIPSTGLCSPDLVNRIIKQEPVLENCSQELVQHQADLTCTTTLDLTDGTISFTNNLGTMPESSPAYSIPRKMASNLEDILMDDALSPVGVTDPLLSSVSPGASKTSSRRSSMSAEETEHAC</sequence>
<accession>O88368</accession>
<accession>F1LQV3</accession>
<proteinExistence type="evidence at transcript level"/>
<comment type="function">
    <text evidence="1">Transcription factor that regulates the expression of genes with essential roles in cell differentiation, proliferation and survival. Binds to M-boxes (5'-TCATGTG-3') and symmetrical DNA sequences (E-boxes) (5'-CACGTG-3') found in the promoters of target genes, such as BCL2 and tyrosinase (TYR). Plays an important role in melanocyte development by regulating the expression of tyrosinase (TYR) and tyrosinase-related protein 1 (TYRP1). Plays a critical role in the differentiation of various cell types, such as neural crest-derived melanocytes, mast cells, osteoclasts and optic cup-derived retinal pigment epithelium.</text>
</comment>
<comment type="subunit">
    <text evidence="1 2">Homodimer or heterodimer; dimerization is mediated via the coiled coil region (By similarity). Efficient DNA binding requires dimerization with another bHLH protein (By similarity). Binds DNA in the form of homodimer or heterodimer with either TFE3, TFEB or TFEC (By similarity). Identified in a complex with HINT1 and CTNNB1 (By similarity). Interacts with KARS1 (By similarity). Interacts with VSX2 (By similarity).</text>
</comment>
<comment type="subcellular location">
    <subcellularLocation>
        <location evidence="1">Nucleus</location>
    </subcellularLocation>
    <subcellularLocation>
        <location evidence="1">Cytoplasm</location>
    </subcellularLocation>
    <text evidence="1">Found exclusively in the nucleus upon phosphorylation.</text>
</comment>
<comment type="domain">
    <text evidence="1">The leucine zipper region is part of a larger coiled coil.</text>
</comment>
<comment type="PTM">
    <text evidence="1">Phosphorylation at Ser-405 significantly enhances the ability to bind the tyrosinase promoter (By similarity). Phosphorylated at Ser-180 and Ser-516 following KIT signaling, triggering a short live activation: Phosphorylation at Ser-180 and Ser-516 by MAPK and RPS6KA1, respectively, activate the transcription factor activity but also promote ubiquitination and subsequent degradation by the proteasome (By similarity). Phosphorylated in response to blue light (415nm) (By similarity).</text>
</comment>
<comment type="PTM">
    <text evidence="1">Ubiquitinated following phosphorylation at Ser-180, leading to subsequent degradation by the proteasome. Deubiquitinated by USP13, preventing its degradation.</text>
</comment>
<comment type="disease">
    <text evidence="6">Osteopetrotic rat of unknown genetic defect microphthalmia-blanc (mib) has been described whose skeletal sclerosis improves dramatically with age and that is associated with pigmentation defects. Mib at the homozygous state shows absence of skin and fur pigmentation, small eyes, and defects of incisor tooth eruption.</text>
</comment>
<comment type="similarity">
    <text evidence="7">Belongs to the MiT/TFE family.</text>
</comment>
<feature type="chain" id="PRO_0000127278" description="Microphthalmia-associated transcription factor">
    <location>
        <begin position="1"/>
        <end position="526"/>
    </location>
</feature>
<feature type="domain" description="bHLH" evidence="4">
    <location>
        <begin position="311"/>
        <end position="364"/>
    </location>
</feature>
<feature type="region of interest" description="Disordered" evidence="5">
    <location>
        <begin position="20"/>
        <end position="54"/>
    </location>
</feature>
<feature type="region of interest" description="Leucine-zipper" evidence="7">
    <location>
        <begin position="374"/>
        <end position="395"/>
    </location>
</feature>
<feature type="region of interest" description="Disordered" evidence="5">
    <location>
        <begin position="496"/>
        <end position="526"/>
    </location>
</feature>
<feature type="coiled-coil region" evidence="3">
    <location>
        <begin position="355"/>
        <end position="401"/>
    </location>
</feature>
<feature type="compositionally biased region" description="Low complexity" evidence="5">
    <location>
        <begin position="34"/>
        <end position="44"/>
    </location>
</feature>
<feature type="compositionally biased region" description="Low complexity" evidence="5">
    <location>
        <begin position="507"/>
        <end position="519"/>
    </location>
</feature>
<feature type="modified residue" description="Phosphoserine; by MAPK" evidence="1">
    <location>
        <position position="180"/>
    </location>
</feature>
<feature type="modified residue" description="Phosphoserine; by GSK3" evidence="1">
    <location>
        <position position="405"/>
    </location>
</feature>
<feature type="modified residue" description="Phosphoserine" evidence="1">
    <location>
        <position position="414"/>
    </location>
</feature>
<feature type="modified residue" description="Phosphoserine" evidence="1">
    <location>
        <position position="491"/>
    </location>
</feature>
<feature type="modified residue" description="Phosphoserine; by RPS6KA1" evidence="1">
    <location>
        <position position="516"/>
    </location>
</feature>
<feature type="cross-link" description="Glycyl lysine isopeptide (Lys-Gly) (interchain with G-Cter in SUMO)" evidence="1">
    <location>
        <position position="289"/>
    </location>
</feature>
<feature type="cross-link" description="Glycyl lysine isopeptide (Lys-Gly) (interchain with G-Cter in SUMO)" evidence="1">
    <location>
        <position position="423"/>
    </location>
</feature>
<reference key="1">
    <citation type="journal article" date="2004" name="Nature">
        <title>Genome sequence of the Brown Norway rat yields insights into mammalian evolution.</title>
        <authorList>
            <person name="Gibbs R.A."/>
            <person name="Weinstock G.M."/>
            <person name="Metzker M.L."/>
            <person name="Muzny D.M."/>
            <person name="Sodergren E.J."/>
            <person name="Scherer S."/>
            <person name="Scott G."/>
            <person name="Steffen D."/>
            <person name="Worley K.C."/>
            <person name="Burch P.E."/>
            <person name="Okwuonu G."/>
            <person name="Hines S."/>
            <person name="Lewis L."/>
            <person name="Deramo C."/>
            <person name="Delgado O."/>
            <person name="Dugan-Rocha S."/>
            <person name="Miner G."/>
            <person name="Morgan M."/>
            <person name="Hawes A."/>
            <person name="Gill R."/>
            <person name="Holt R.A."/>
            <person name="Adams M.D."/>
            <person name="Amanatides P.G."/>
            <person name="Baden-Tillson H."/>
            <person name="Barnstead M."/>
            <person name="Chin S."/>
            <person name="Evans C.A."/>
            <person name="Ferriera S."/>
            <person name="Fosler C."/>
            <person name="Glodek A."/>
            <person name="Gu Z."/>
            <person name="Jennings D."/>
            <person name="Kraft C.L."/>
            <person name="Nguyen T."/>
            <person name="Pfannkoch C.M."/>
            <person name="Sitter C."/>
            <person name="Sutton G.G."/>
            <person name="Venter J.C."/>
            <person name="Woodage T."/>
            <person name="Smith D."/>
            <person name="Lee H.-M."/>
            <person name="Gustafson E."/>
            <person name="Cahill P."/>
            <person name="Kana A."/>
            <person name="Doucette-Stamm L."/>
            <person name="Weinstock K."/>
            <person name="Fechtel K."/>
            <person name="Weiss R.B."/>
            <person name="Dunn D.M."/>
            <person name="Green E.D."/>
            <person name="Blakesley R.W."/>
            <person name="Bouffard G.G."/>
            <person name="De Jong P.J."/>
            <person name="Osoegawa K."/>
            <person name="Zhu B."/>
            <person name="Marra M."/>
            <person name="Schein J."/>
            <person name="Bosdet I."/>
            <person name="Fjell C."/>
            <person name="Jones S."/>
            <person name="Krzywinski M."/>
            <person name="Mathewson C."/>
            <person name="Siddiqui A."/>
            <person name="Wye N."/>
            <person name="McPherson J."/>
            <person name="Zhao S."/>
            <person name="Fraser C.M."/>
            <person name="Shetty J."/>
            <person name="Shatsman S."/>
            <person name="Geer K."/>
            <person name="Chen Y."/>
            <person name="Abramzon S."/>
            <person name="Nierman W.C."/>
            <person name="Havlak P.H."/>
            <person name="Chen R."/>
            <person name="Durbin K.J."/>
            <person name="Egan A."/>
            <person name="Ren Y."/>
            <person name="Song X.-Z."/>
            <person name="Li B."/>
            <person name="Liu Y."/>
            <person name="Qin X."/>
            <person name="Cawley S."/>
            <person name="Cooney A.J."/>
            <person name="D'Souza L.M."/>
            <person name="Martin K."/>
            <person name="Wu J.Q."/>
            <person name="Gonzalez-Garay M.L."/>
            <person name="Jackson A.R."/>
            <person name="Kalafus K.J."/>
            <person name="McLeod M.P."/>
            <person name="Milosavljevic A."/>
            <person name="Virk D."/>
            <person name="Volkov A."/>
            <person name="Wheeler D.A."/>
            <person name="Zhang Z."/>
            <person name="Bailey J.A."/>
            <person name="Eichler E.E."/>
            <person name="Tuzun E."/>
            <person name="Birney E."/>
            <person name="Mongin E."/>
            <person name="Ureta-Vidal A."/>
            <person name="Woodwark C."/>
            <person name="Zdobnov E."/>
            <person name="Bork P."/>
            <person name="Suyama M."/>
            <person name="Torrents D."/>
            <person name="Alexandersson M."/>
            <person name="Trask B.J."/>
            <person name="Young J.M."/>
            <person name="Huang H."/>
            <person name="Wang H."/>
            <person name="Xing H."/>
            <person name="Daniels S."/>
            <person name="Gietzen D."/>
            <person name="Schmidt J."/>
            <person name="Stevens K."/>
            <person name="Vitt U."/>
            <person name="Wingrove J."/>
            <person name="Camara F."/>
            <person name="Mar Alba M."/>
            <person name="Abril J.F."/>
            <person name="Guigo R."/>
            <person name="Smit A."/>
            <person name="Dubchak I."/>
            <person name="Rubin E.M."/>
            <person name="Couronne O."/>
            <person name="Poliakov A."/>
            <person name="Huebner N."/>
            <person name="Ganten D."/>
            <person name="Goesele C."/>
            <person name="Hummel O."/>
            <person name="Kreitler T."/>
            <person name="Lee Y.-A."/>
            <person name="Monti J."/>
            <person name="Schulz H."/>
            <person name="Zimdahl H."/>
            <person name="Himmelbauer H."/>
            <person name="Lehrach H."/>
            <person name="Jacob H.J."/>
            <person name="Bromberg S."/>
            <person name="Gullings-Handley J."/>
            <person name="Jensen-Seaman M.I."/>
            <person name="Kwitek A.E."/>
            <person name="Lazar J."/>
            <person name="Pasko D."/>
            <person name="Tonellato P.J."/>
            <person name="Twigger S."/>
            <person name="Ponting C.P."/>
            <person name="Duarte J.M."/>
            <person name="Rice S."/>
            <person name="Goodstadt L."/>
            <person name="Beatson S.A."/>
            <person name="Emes R.D."/>
            <person name="Winter E.E."/>
            <person name="Webber C."/>
            <person name="Brandt P."/>
            <person name="Nyakatura G."/>
            <person name="Adetobi M."/>
            <person name="Chiaromonte F."/>
            <person name="Elnitski L."/>
            <person name="Eswara P."/>
            <person name="Hardison R.C."/>
            <person name="Hou M."/>
            <person name="Kolbe D."/>
            <person name="Makova K."/>
            <person name="Miller W."/>
            <person name="Nekrutenko A."/>
            <person name="Riemer C."/>
            <person name="Schwartz S."/>
            <person name="Taylor J."/>
            <person name="Yang S."/>
            <person name="Zhang Y."/>
            <person name="Lindpaintner K."/>
            <person name="Andrews T.D."/>
            <person name="Caccamo M."/>
            <person name="Clamp M."/>
            <person name="Clarke L."/>
            <person name="Curwen V."/>
            <person name="Durbin R.M."/>
            <person name="Eyras E."/>
            <person name="Searle S.M."/>
            <person name="Cooper G.M."/>
            <person name="Batzoglou S."/>
            <person name="Brudno M."/>
            <person name="Sidow A."/>
            <person name="Stone E.A."/>
            <person name="Payseur B.A."/>
            <person name="Bourque G."/>
            <person name="Lopez-Otin C."/>
            <person name="Puente X.S."/>
            <person name="Chakrabarti K."/>
            <person name="Chatterji S."/>
            <person name="Dewey C."/>
            <person name="Pachter L."/>
            <person name="Bray N."/>
            <person name="Yap V.B."/>
            <person name="Caspi A."/>
            <person name="Tesler G."/>
            <person name="Pevzner P.A."/>
            <person name="Haussler D."/>
            <person name="Roskin K.M."/>
            <person name="Baertsch R."/>
            <person name="Clawson H."/>
            <person name="Furey T.S."/>
            <person name="Hinrichs A.S."/>
            <person name="Karolchik D."/>
            <person name="Kent W.J."/>
            <person name="Rosenbloom K.R."/>
            <person name="Trumbower H."/>
            <person name="Weirauch M."/>
            <person name="Cooper D.N."/>
            <person name="Stenson P.D."/>
            <person name="Ma B."/>
            <person name="Brent M."/>
            <person name="Arumugam M."/>
            <person name="Shteynberg D."/>
            <person name="Copley R.R."/>
            <person name="Taylor M.S."/>
            <person name="Riethman H."/>
            <person name="Mudunuri U."/>
            <person name="Peterson J."/>
            <person name="Guyer M."/>
            <person name="Felsenfeld A."/>
            <person name="Old S."/>
            <person name="Mockrin S."/>
            <person name="Collins F.S."/>
        </authorList>
    </citation>
    <scope>NUCLEOTIDE SEQUENCE [LARGE SCALE GENOMIC DNA]</scope>
    <source>
        <strain>Brown Norway</strain>
    </source>
</reference>
<reference key="2">
    <citation type="journal article" date="1998" name="J. Exp. Med.">
        <title>Age-resolving osteopetrosis: a rat model implicating microphthalmia and the related transcription factor TFE3.</title>
        <authorList>
            <person name="Weilbaecher K.N."/>
            <person name="Hershey C.L."/>
            <person name="Takemoto C.M."/>
            <person name="Horstmann M.A."/>
            <person name="Hemesath T.J."/>
            <person name="Tashjian A.H."/>
            <person name="Fisher D.E."/>
        </authorList>
    </citation>
    <scope>NUCLEOTIDE SEQUENCE [MRNA] OF 292-401</scope>
    <scope>DISEASE</scope>
</reference>
<keyword id="KW-0010">Activator</keyword>
<keyword id="KW-0175">Coiled coil</keyword>
<keyword id="KW-0963">Cytoplasm</keyword>
<keyword id="KW-0217">Developmental protein</keyword>
<keyword id="KW-0238">DNA-binding</keyword>
<keyword id="KW-1017">Isopeptide bond</keyword>
<keyword id="KW-0539">Nucleus</keyword>
<keyword id="KW-0597">Phosphoprotein</keyword>
<keyword id="KW-1185">Reference proteome</keyword>
<keyword id="KW-0804">Transcription</keyword>
<keyword id="KW-0805">Transcription regulation</keyword>
<keyword id="KW-0832">Ubl conjugation</keyword>
<evidence type="ECO:0000250" key="1">
    <source>
        <dbReference type="UniProtKB" id="O75030"/>
    </source>
</evidence>
<evidence type="ECO:0000250" key="2">
    <source>
        <dbReference type="UniProtKB" id="Q08874"/>
    </source>
</evidence>
<evidence type="ECO:0000255" key="3"/>
<evidence type="ECO:0000255" key="4">
    <source>
        <dbReference type="PROSITE-ProRule" id="PRU00981"/>
    </source>
</evidence>
<evidence type="ECO:0000256" key="5">
    <source>
        <dbReference type="SAM" id="MobiDB-lite"/>
    </source>
</evidence>
<evidence type="ECO:0000269" key="6">
    <source>
    </source>
</evidence>
<evidence type="ECO:0000305" key="7"/>
<gene>
    <name type="primary">Mitf</name>
</gene>
<dbReference type="EMBL" id="AABR07061507">
    <property type="status" value="NOT_ANNOTATED_CDS"/>
    <property type="molecule type" value="Genomic_DNA"/>
</dbReference>
<dbReference type="EMBL" id="AABR07061508">
    <property type="status" value="NOT_ANNOTATED_CDS"/>
    <property type="molecule type" value="Genomic_DNA"/>
</dbReference>
<dbReference type="EMBL" id="AABR07061509">
    <property type="status" value="NOT_ANNOTATED_CDS"/>
    <property type="molecule type" value="Genomic_DNA"/>
</dbReference>
<dbReference type="EMBL" id="AABR07061510">
    <property type="status" value="NOT_ANNOTATED_CDS"/>
    <property type="molecule type" value="Genomic_DNA"/>
</dbReference>
<dbReference type="EMBL" id="AABR07061511">
    <property type="status" value="NOT_ANNOTATED_CDS"/>
    <property type="molecule type" value="Genomic_DNA"/>
</dbReference>
<dbReference type="EMBL" id="AF029886">
    <property type="protein sequence ID" value="AAC26170.1"/>
    <property type="molecule type" value="mRNA"/>
</dbReference>
<dbReference type="RefSeq" id="NP_001178018.1">
    <property type="nucleotide sequence ID" value="NM_001191089.5"/>
</dbReference>
<dbReference type="SMR" id="O88368"/>
<dbReference type="CORUM" id="O88368"/>
<dbReference type="FunCoup" id="O88368">
    <property type="interactions" value="755"/>
</dbReference>
<dbReference type="STRING" id="10116.ENSRNOP00000044350"/>
<dbReference type="iPTMnet" id="O88368"/>
<dbReference type="PhosphoSitePlus" id="O88368"/>
<dbReference type="PaxDb" id="10116-ENSRNOP00000044350"/>
<dbReference type="GeneID" id="25094"/>
<dbReference type="KEGG" id="rno:25094"/>
<dbReference type="UCSC" id="RGD:3092">
    <property type="organism name" value="rat"/>
</dbReference>
<dbReference type="AGR" id="RGD:3092"/>
<dbReference type="CTD" id="4286"/>
<dbReference type="RGD" id="3092">
    <property type="gene designation" value="Mitf"/>
</dbReference>
<dbReference type="VEuPathDB" id="HostDB:ENSRNOG00000008658"/>
<dbReference type="eggNOG" id="KOG1318">
    <property type="taxonomic scope" value="Eukaryota"/>
</dbReference>
<dbReference type="InParanoid" id="O88368"/>
<dbReference type="OrthoDB" id="6242697at2759"/>
<dbReference type="TreeFam" id="TF317174"/>
<dbReference type="Reactome" id="R-RNO-3232118">
    <property type="pathway name" value="SUMOylation of transcription factors"/>
</dbReference>
<dbReference type="Reactome" id="R-RNO-9824594">
    <property type="pathway name" value="Regulation of MITF-M-dependent genes involved in apoptosis"/>
</dbReference>
<dbReference type="Reactome" id="R-RNO-9856649">
    <property type="pathway name" value="Transcriptional and post-translational regulation of MITF-M expression and activity"/>
</dbReference>
<dbReference type="PRO" id="PR:O88368"/>
<dbReference type="Proteomes" id="UP000002494">
    <property type="component" value="Chromosome 4"/>
</dbReference>
<dbReference type="Bgee" id="ENSRNOG00000008658">
    <property type="expression patterns" value="Expressed in heart and 19 other cell types or tissues"/>
</dbReference>
<dbReference type="ExpressionAtlas" id="O88368">
    <property type="expression patterns" value="baseline and differential"/>
</dbReference>
<dbReference type="GO" id="GO:0005737">
    <property type="term" value="C:cytoplasm"/>
    <property type="evidence" value="ECO:0000250"/>
    <property type="project" value="UniProtKB"/>
</dbReference>
<dbReference type="GO" id="GO:0005765">
    <property type="term" value="C:lysosomal membrane"/>
    <property type="evidence" value="ECO:0000266"/>
    <property type="project" value="RGD"/>
</dbReference>
<dbReference type="GO" id="GO:0005634">
    <property type="term" value="C:nucleus"/>
    <property type="evidence" value="ECO:0000250"/>
    <property type="project" value="UniProtKB"/>
</dbReference>
<dbReference type="GO" id="GO:0032991">
    <property type="term" value="C:protein-containing complex"/>
    <property type="evidence" value="ECO:0000266"/>
    <property type="project" value="RGD"/>
</dbReference>
<dbReference type="GO" id="GO:0003682">
    <property type="term" value="F:chromatin binding"/>
    <property type="evidence" value="ECO:0000266"/>
    <property type="project" value="RGD"/>
</dbReference>
<dbReference type="GO" id="GO:0003677">
    <property type="term" value="F:DNA binding"/>
    <property type="evidence" value="ECO:0000266"/>
    <property type="project" value="RGD"/>
</dbReference>
<dbReference type="GO" id="GO:0001228">
    <property type="term" value="F:DNA-binding transcription activator activity, RNA polymerase II-specific"/>
    <property type="evidence" value="ECO:0000266"/>
    <property type="project" value="RGD"/>
</dbReference>
<dbReference type="GO" id="GO:0003700">
    <property type="term" value="F:DNA-binding transcription factor activity"/>
    <property type="evidence" value="ECO:0000266"/>
    <property type="project" value="RGD"/>
</dbReference>
<dbReference type="GO" id="GO:0000981">
    <property type="term" value="F:DNA-binding transcription factor activity, RNA polymerase II-specific"/>
    <property type="evidence" value="ECO:0000250"/>
    <property type="project" value="UniProtKB"/>
</dbReference>
<dbReference type="GO" id="GO:0070888">
    <property type="term" value="F:E-box binding"/>
    <property type="evidence" value="ECO:0000250"/>
    <property type="project" value="UniProtKB"/>
</dbReference>
<dbReference type="GO" id="GO:0046983">
    <property type="term" value="F:protein dimerization activity"/>
    <property type="evidence" value="ECO:0000266"/>
    <property type="project" value="RGD"/>
</dbReference>
<dbReference type="GO" id="GO:0000978">
    <property type="term" value="F:RNA polymerase II cis-regulatory region sequence-specific DNA binding"/>
    <property type="evidence" value="ECO:0000266"/>
    <property type="project" value="RGD"/>
</dbReference>
<dbReference type="GO" id="GO:0046849">
    <property type="term" value="P:bone remodeling"/>
    <property type="evidence" value="ECO:0000266"/>
    <property type="project" value="RGD"/>
</dbReference>
<dbReference type="GO" id="GO:0043010">
    <property type="term" value="P:camera-type eye development"/>
    <property type="evidence" value="ECO:0000266"/>
    <property type="project" value="RGD"/>
</dbReference>
<dbReference type="GO" id="GO:0030154">
    <property type="term" value="P:cell differentiation"/>
    <property type="evidence" value="ECO:0000266"/>
    <property type="project" value="RGD"/>
</dbReference>
<dbReference type="GO" id="GO:0045165">
    <property type="term" value="P:cell fate commitment"/>
    <property type="evidence" value="ECO:0000266"/>
    <property type="project" value="RGD"/>
</dbReference>
<dbReference type="GO" id="GO:0034224">
    <property type="term" value="P:cellular response to zinc ion starvation"/>
    <property type="evidence" value="ECO:0000270"/>
    <property type="project" value="RGD"/>
</dbReference>
<dbReference type="GO" id="GO:0006351">
    <property type="term" value="P:DNA-templated transcription"/>
    <property type="evidence" value="ECO:0000314"/>
    <property type="project" value="CAFA"/>
</dbReference>
<dbReference type="GO" id="GO:1902362">
    <property type="term" value="P:melanocyte apoptotic process"/>
    <property type="evidence" value="ECO:0000266"/>
    <property type="project" value="RGD"/>
</dbReference>
<dbReference type="GO" id="GO:0030318">
    <property type="term" value="P:melanocyte differentiation"/>
    <property type="evidence" value="ECO:0000266"/>
    <property type="project" value="RGD"/>
</dbReference>
<dbReference type="GO" id="GO:0043066">
    <property type="term" value="P:negative regulation of apoptotic process"/>
    <property type="evidence" value="ECO:0000266"/>
    <property type="project" value="RGD"/>
</dbReference>
<dbReference type="GO" id="GO:0030336">
    <property type="term" value="P:negative regulation of cell migration"/>
    <property type="evidence" value="ECO:0000266"/>
    <property type="project" value="RGD"/>
</dbReference>
<dbReference type="GO" id="GO:0000122">
    <property type="term" value="P:negative regulation of transcription by RNA polymerase II"/>
    <property type="evidence" value="ECO:0000266"/>
    <property type="project" value="RGD"/>
</dbReference>
<dbReference type="GO" id="GO:0030316">
    <property type="term" value="P:osteoclast differentiation"/>
    <property type="evidence" value="ECO:0000270"/>
    <property type="project" value="RGD"/>
</dbReference>
<dbReference type="GO" id="GO:0043473">
    <property type="term" value="P:pigmentation"/>
    <property type="evidence" value="ECO:0000266"/>
    <property type="project" value="RGD"/>
</dbReference>
<dbReference type="GO" id="GO:0045893">
    <property type="term" value="P:positive regulation of DNA-templated transcription"/>
    <property type="evidence" value="ECO:0000266"/>
    <property type="project" value="RGD"/>
</dbReference>
<dbReference type="GO" id="GO:2000144">
    <property type="term" value="P:positive regulation of DNA-templated transcription initiation"/>
    <property type="evidence" value="ECO:0000266"/>
    <property type="project" value="RGD"/>
</dbReference>
<dbReference type="GO" id="GO:0010628">
    <property type="term" value="P:positive regulation of gene expression"/>
    <property type="evidence" value="ECO:0000266"/>
    <property type="project" value="RGD"/>
</dbReference>
<dbReference type="GO" id="GO:0045944">
    <property type="term" value="P:positive regulation of transcription by RNA polymerase II"/>
    <property type="evidence" value="ECO:0000250"/>
    <property type="project" value="UniProtKB"/>
</dbReference>
<dbReference type="GO" id="GO:0065003">
    <property type="term" value="P:protein-containing complex assembly"/>
    <property type="evidence" value="ECO:0000266"/>
    <property type="project" value="RGD"/>
</dbReference>
<dbReference type="GO" id="GO:0042127">
    <property type="term" value="P:regulation of cell population proliferation"/>
    <property type="evidence" value="ECO:0000266"/>
    <property type="project" value="RGD"/>
</dbReference>
<dbReference type="GO" id="GO:0006355">
    <property type="term" value="P:regulation of DNA-templated transcription"/>
    <property type="evidence" value="ECO:0000266"/>
    <property type="project" value="RGD"/>
</dbReference>
<dbReference type="GO" id="GO:0010468">
    <property type="term" value="P:regulation of gene expression"/>
    <property type="evidence" value="ECO:0000266"/>
    <property type="project" value="RGD"/>
</dbReference>
<dbReference type="GO" id="GO:0045670">
    <property type="term" value="P:regulation of osteoclast differentiation"/>
    <property type="evidence" value="ECO:0000266"/>
    <property type="project" value="RGD"/>
</dbReference>
<dbReference type="GO" id="GO:2001141">
    <property type="term" value="P:regulation of RNA biosynthetic process"/>
    <property type="evidence" value="ECO:0000266"/>
    <property type="project" value="RGD"/>
</dbReference>
<dbReference type="GO" id="GO:0006357">
    <property type="term" value="P:regulation of transcription by RNA polymerase II"/>
    <property type="evidence" value="ECO:0000250"/>
    <property type="project" value="UniProtKB"/>
</dbReference>
<dbReference type="GO" id="GO:0045471">
    <property type="term" value="P:response to ethanol"/>
    <property type="evidence" value="ECO:0000270"/>
    <property type="project" value="RGD"/>
</dbReference>
<dbReference type="GO" id="GO:0016055">
    <property type="term" value="P:Wnt signaling pathway"/>
    <property type="evidence" value="ECO:0000266"/>
    <property type="project" value="RGD"/>
</dbReference>
<dbReference type="CDD" id="cd18926">
    <property type="entry name" value="bHLHzip_MITF"/>
    <property type="match status" value="1"/>
</dbReference>
<dbReference type="FunFam" id="4.10.280.10:FF:000003">
    <property type="entry name" value="microphthalmia-associated transcription factor isoform X1"/>
    <property type="match status" value="1"/>
</dbReference>
<dbReference type="Gene3D" id="4.10.280.10">
    <property type="entry name" value="Helix-loop-helix DNA-binding domain"/>
    <property type="match status" value="1"/>
</dbReference>
<dbReference type="InterPro" id="IPR011598">
    <property type="entry name" value="bHLH_dom"/>
</dbReference>
<dbReference type="InterPro" id="IPR036638">
    <property type="entry name" value="HLH_DNA-bd_sf"/>
</dbReference>
<dbReference type="InterPro" id="IPR021802">
    <property type="entry name" value="MiT/TFE_C"/>
</dbReference>
<dbReference type="InterPro" id="IPR031867">
    <property type="entry name" value="MiT/TFE_N"/>
</dbReference>
<dbReference type="PANTHER" id="PTHR45776:SF4">
    <property type="entry name" value="MICROPHTHALMIA-ASSOCIATED TRANSCRIPTION FACTOR"/>
    <property type="match status" value="1"/>
</dbReference>
<dbReference type="PANTHER" id="PTHR45776">
    <property type="entry name" value="MIP04163P"/>
    <property type="match status" value="1"/>
</dbReference>
<dbReference type="Pfam" id="PF11851">
    <property type="entry name" value="DUF3371"/>
    <property type="match status" value="1"/>
</dbReference>
<dbReference type="Pfam" id="PF00010">
    <property type="entry name" value="HLH"/>
    <property type="match status" value="1"/>
</dbReference>
<dbReference type="Pfam" id="PF15951">
    <property type="entry name" value="MITF_TFEB_C_3_N"/>
    <property type="match status" value="1"/>
</dbReference>
<dbReference type="SMART" id="SM00353">
    <property type="entry name" value="HLH"/>
    <property type="match status" value="1"/>
</dbReference>
<dbReference type="SUPFAM" id="SSF47459">
    <property type="entry name" value="HLH, helix-loop-helix DNA-binding domain"/>
    <property type="match status" value="1"/>
</dbReference>
<dbReference type="PROSITE" id="PS50888">
    <property type="entry name" value="BHLH"/>
    <property type="match status" value="1"/>
</dbReference>
<name>MITF_RAT</name>
<organism>
    <name type="scientific">Rattus norvegicus</name>
    <name type="common">Rat</name>
    <dbReference type="NCBI Taxonomy" id="10116"/>
    <lineage>
        <taxon>Eukaryota</taxon>
        <taxon>Metazoa</taxon>
        <taxon>Chordata</taxon>
        <taxon>Craniata</taxon>
        <taxon>Vertebrata</taxon>
        <taxon>Euteleostomi</taxon>
        <taxon>Mammalia</taxon>
        <taxon>Eutheria</taxon>
        <taxon>Euarchontoglires</taxon>
        <taxon>Glires</taxon>
        <taxon>Rodentia</taxon>
        <taxon>Myomorpha</taxon>
        <taxon>Muroidea</taxon>
        <taxon>Muridae</taxon>
        <taxon>Murinae</taxon>
        <taxon>Rattus</taxon>
    </lineage>
</organism>
<protein>
    <recommendedName>
        <fullName>Microphthalmia-associated transcription factor</fullName>
    </recommendedName>
</protein>